<gene>
    <name type="primary">ywqM</name>
    <name type="ordered locus">BSU36160</name>
</gene>
<dbReference type="EMBL" id="Z92952">
    <property type="protein sequence ID" value="CAB07458.1"/>
    <property type="molecule type" value="Genomic_DNA"/>
</dbReference>
<dbReference type="EMBL" id="AL009126">
    <property type="protein sequence ID" value="CAB15633.1"/>
    <property type="molecule type" value="Genomic_DNA"/>
</dbReference>
<dbReference type="PIR" id="H70067">
    <property type="entry name" value="H70067"/>
</dbReference>
<dbReference type="RefSeq" id="NP_391497.1">
    <property type="nucleotide sequence ID" value="NC_000964.3"/>
</dbReference>
<dbReference type="RefSeq" id="WP_003243262.1">
    <property type="nucleotide sequence ID" value="NZ_OZ025638.1"/>
</dbReference>
<dbReference type="SMR" id="P96725"/>
<dbReference type="FunCoup" id="P96725">
    <property type="interactions" value="120"/>
</dbReference>
<dbReference type="STRING" id="224308.BSU36160"/>
<dbReference type="PaxDb" id="224308-BSU36160"/>
<dbReference type="EnsemblBacteria" id="CAB15633">
    <property type="protein sequence ID" value="CAB15633"/>
    <property type="gene ID" value="BSU_36160"/>
</dbReference>
<dbReference type="GeneID" id="936887"/>
<dbReference type="KEGG" id="bsu:BSU36160"/>
<dbReference type="PATRIC" id="fig|224308.179.peg.3913"/>
<dbReference type="eggNOG" id="COG0583">
    <property type="taxonomic scope" value="Bacteria"/>
</dbReference>
<dbReference type="InParanoid" id="P96725"/>
<dbReference type="OrthoDB" id="9803735at2"/>
<dbReference type="PhylomeDB" id="P96725"/>
<dbReference type="BioCyc" id="BSUB:BSU36160-MONOMER"/>
<dbReference type="Proteomes" id="UP000001570">
    <property type="component" value="Chromosome"/>
</dbReference>
<dbReference type="GO" id="GO:0005737">
    <property type="term" value="C:cytoplasm"/>
    <property type="evidence" value="ECO:0007669"/>
    <property type="project" value="UniProtKB-SubCell"/>
</dbReference>
<dbReference type="GO" id="GO:0003700">
    <property type="term" value="F:DNA-binding transcription factor activity"/>
    <property type="evidence" value="ECO:0007669"/>
    <property type="project" value="InterPro"/>
</dbReference>
<dbReference type="GO" id="GO:0000976">
    <property type="term" value="F:transcription cis-regulatory region binding"/>
    <property type="evidence" value="ECO:0000318"/>
    <property type="project" value="GO_Central"/>
</dbReference>
<dbReference type="GO" id="GO:0006355">
    <property type="term" value="P:regulation of DNA-templated transcription"/>
    <property type="evidence" value="ECO:0000318"/>
    <property type="project" value="GO_Central"/>
</dbReference>
<dbReference type="CDD" id="cd05466">
    <property type="entry name" value="PBP2_LTTR_substrate"/>
    <property type="match status" value="1"/>
</dbReference>
<dbReference type="FunFam" id="1.10.10.10:FF:000001">
    <property type="entry name" value="LysR family transcriptional regulator"/>
    <property type="match status" value="1"/>
</dbReference>
<dbReference type="Gene3D" id="3.40.190.290">
    <property type="match status" value="1"/>
</dbReference>
<dbReference type="Gene3D" id="1.10.10.10">
    <property type="entry name" value="Winged helix-like DNA-binding domain superfamily/Winged helix DNA-binding domain"/>
    <property type="match status" value="1"/>
</dbReference>
<dbReference type="InterPro" id="IPR005119">
    <property type="entry name" value="LysR_subst-bd"/>
</dbReference>
<dbReference type="InterPro" id="IPR000847">
    <property type="entry name" value="Tscrpt_reg_HTH_LysR"/>
</dbReference>
<dbReference type="InterPro" id="IPR036388">
    <property type="entry name" value="WH-like_DNA-bd_sf"/>
</dbReference>
<dbReference type="InterPro" id="IPR036390">
    <property type="entry name" value="WH_DNA-bd_sf"/>
</dbReference>
<dbReference type="PANTHER" id="PTHR30126">
    <property type="entry name" value="HTH-TYPE TRANSCRIPTIONAL REGULATOR"/>
    <property type="match status" value="1"/>
</dbReference>
<dbReference type="PANTHER" id="PTHR30126:SF100">
    <property type="entry name" value="LYSR-FAMILY TRANSCRIPTIONAL REGULATOR"/>
    <property type="match status" value="1"/>
</dbReference>
<dbReference type="Pfam" id="PF00126">
    <property type="entry name" value="HTH_1"/>
    <property type="match status" value="1"/>
</dbReference>
<dbReference type="Pfam" id="PF03466">
    <property type="entry name" value="LysR_substrate"/>
    <property type="match status" value="1"/>
</dbReference>
<dbReference type="PRINTS" id="PR00039">
    <property type="entry name" value="HTHLYSR"/>
</dbReference>
<dbReference type="SUPFAM" id="SSF53850">
    <property type="entry name" value="Periplasmic binding protein-like II"/>
    <property type="match status" value="1"/>
</dbReference>
<dbReference type="SUPFAM" id="SSF46785">
    <property type="entry name" value="Winged helix' DNA-binding domain"/>
    <property type="match status" value="1"/>
</dbReference>
<dbReference type="PROSITE" id="PS50931">
    <property type="entry name" value="HTH_LYSR"/>
    <property type="match status" value="1"/>
</dbReference>
<evidence type="ECO:0000255" key="1">
    <source>
        <dbReference type="PROSITE-ProRule" id="PRU00253"/>
    </source>
</evidence>
<evidence type="ECO:0000305" key="2"/>
<protein>
    <recommendedName>
        <fullName>Uncharacterized HTH-type transcriptional regulator YwqM</fullName>
    </recommendedName>
</protein>
<name>YWQM_BACSU</name>
<feature type="chain" id="PRO_0000360683" description="Uncharacterized HTH-type transcriptional regulator YwqM">
    <location>
        <begin position="1"/>
        <end position="293"/>
    </location>
</feature>
<feature type="domain" description="HTH lysR-type" evidence="1">
    <location>
        <begin position="1"/>
        <end position="58"/>
    </location>
</feature>
<feature type="DNA-binding region" description="H-T-H motif" evidence="1">
    <location>
        <begin position="18"/>
        <end position="37"/>
    </location>
</feature>
<organism>
    <name type="scientific">Bacillus subtilis (strain 168)</name>
    <dbReference type="NCBI Taxonomy" id="224308"/>
    <lineage>
        <taxon>Bacteria</taxon>
        <taxon>Bacillati</taxon>
        <taxon>Bacillota</taxon>
        <taxon>Bacilli</taxon>
        <taxon>Bacillales</taxon>
        <taxon>Bacillaceae</taxon>
        <taxon>Bacillus</taxon>
    </lineage>
</organism>
<accession>P96725</accession>
<accession>Q795B9</accession>
<reference key="1">
    <citation type="journal article" date="1997" name="Microbiology">
        <title>The Bacillus subtilis genome from gerBC (311 degrees) to licR (334 degrees).</title>
        <authorList>
            <person name="Presecan E."/>
            <person name="Moszer I."/>
            <person name="Boursier L."/>
            <person name="Cruz Ramos H."/>
            <person name="De La Fuente V."/>
            <person name="Hullo M.-F."/>
            <person name="Lelong C."/>
            <person name="Schleich S."/>
            <person name="Sekowska A."/>
            <person name="Song B.H."/>
            <person name="Villani G."/>
            <person name="Kunst F."/>
            <person name="Danchin A."/>
            <person name="Glaser P."/>
        </authorList>
    </citation>
    <scope>NUCLEOTIDE SEQUENCE [GENOMIC DNA]</scope>
    <source>
        <strain>168</strain>
    </source>
</reference>
<reference key="2">
    <citation type="journal article" date="1997" name="Nature">
        <title>The complete genome sequence of the Gram-positive bacterium Bacillus subtilis.</title>
        <authorList>
            <person name="Kunst F."/>
            <person name="Ogasawara N."/>
            <person name="Moszer I."/>
            <person name="Albertini A.M."/>
            <person name="Alloni G."/>
            <person name="Azevedo V."/>
            <person name="Bertero M.G."/>
            <person name="Bessieres P."/>
            <person name="Bolotin A."/>
            <person name="Borchert S."/>
            <person name="Borriss R."/>
            <person name="Boursier L."/>
            <person name="Brans A."/>
            <person name="Braun M."/>
            <person name="Brignell S.C."/>
            <person name="Bron S."/>
            <person name="Brouillet S."/>
            <person name="Bruschi C.V."/>
            <person name="Caldwell B."/>
            <person name="Capuano V."/>
            <person name="Carter N.M."/>
            <person name="Choi S.-K."/>
            <person name="Codani J.-J."/>
            <person name="Connerton I.F."/>
            <person name="Cummings N.J."/>
            <person name="Daniel R.A."/>
            <person name="Denizot F."/>
            <person name="Devine K.M."/>
            <person name="Duesterhoeft A."/>
            <person name="Ehrlich S.D."/>
            <person name="Emmerson P.T."/>
            <person name="Entian K.-D."/>
            <person name="Errington J."/>
            <person name="Fabret C."/>
            <person name="Ferrari E."/>
            <person name="Foulger D."/>
            <person name="Fritz C."/>
            <person name="Fujita M."/>
            <person name="Fujita Y."/>
            <person name="Fuma S."/>
            <person name="Galizzi A."/>
            <person name="Galleron N."/>
            <person name="Ghim S.-Y."/>
            <person name="Glaser P."/>
            <person name="Goffeau A."/>
            <person name="Golightly E.J."/>
            <person name="Grandi G."/>
            <person name="Guiseppi G."/>
            <person name="Guy B.J."/>
            <person name="Haga K."/>
            <person name="Haiech J."/>
            <person name="Harwood C.R."/>
            <person name="Henaut A."/>
            <person name="Hilbert H."/>
            <person name="Holsappel S."/>
            <person name="Hosono S."/>
            <person name="Hullo M.-F."/>
            <person name="Itaya M."/>
            <person name="Jones L.-M."/>
            <person name="Joris B."/>
            <person name="Karamata D."/>
            <person name="Kasahara Y."/>
            <person name="Klaerr-Blanchard M."/>
            <person name="Klein C."/>
            <person name="Kobayashi Y."/>
            <person name="Koetter P."/>
            <person name="Koningstein G."/>
            <person name="Krogh S."/>
            <person name="Kumano M."/>
            <person name="Kurita K."/>
            <person name="Lapidus A."/>
            <person name="Lardinois S."/>
            <person name="Lauber J."/>
            <person name="Lazarevic V."/>
            <person name="Lee S.-M."/>
            <person name="Levine A."/>
            <person name="Liu H."/>
            <person name="Masuda S."/>
            <person name="Mauel C."/>
            <person name="Medigue C."/>
            <person name="Medina N."/>
            <person name="Mellado R.P."/>
            <person name="Mizuno M."/>
            <person name="Moestl D."/>
            <person name="Nakai S."/>
            <person name="Noback M."/>
            <person name="Noone D."/>
            <person name="O'Reilly M."/>
            <person name="Ogawa K."/>
            <person name="Ogiwara A."/>
            <person name="Oudega B."/>
            <person name="Park S.-H."/>
            <person name="Parro V."/>
            <person name="Pohl T.M."/>
            <person name="Portetelle D."/>
            <person name="Porwollik S."/>
            <person name="Prescott A.M."/>
            <person name="Presecan E."/>
            <person name="Pujic P."/>
            <person name="Purnelle B."/>
            <person name="Rapoport G."/>
            <person name="Rey M."/>
            <person name="Reynolds S."/>
            <person name="Rieger M."/>
            <person name="Rivolta C."/>
            <person name="Rocha E."/>
            <person name="Roche B."/>
            <person name="Rose M."/>
            <person name="Sadaie Y."/>
            <person name="Sato T."/>
            <person name="Scanlan E."/>
            <person name="Schleich S."/>
            <person name="Schroeter R."/>
            <person name="Scoffone F."/>
            <person name="Sekiguchi J."/>
            <person name="Sekowska A."/>
            <person name="Seror S.J."/>
            <person name="Serror P."/>
            <person name="Shin B.-S."/>
            <person name="Soldo B."/>
            <person name="Sorokin A."/>
            <person name="Tacconi E."/>
            <person name="Takagi T."/>
            <person name="Takahashi H."/>
            <person name="Takemaru K."/>
            <person name="Takeuchi M."/>
            <person name="Tamakoshi A."/>
            <person name="Tanaka T."/>
            <person name="Terpstra P."/>
            <person name="Tognoni A."/>
            <person name="Tosato V."/>
            <person name="Uchiyama S."/>
            <person name="Vandenbol M."/>
            <person name="Vannier F."/>
            <person name="Vassarotti A."/>
            <person name="Viari A."/>
            <person name="Wambutt R."/>
            <person name="Wedler E."/>
            <person name="Wedler H."/>
            <person name="Weitzenegger T."/>
            <person name="Winters P."/>
            <person name="Wipat A."/>
            <person name="Yamamoto H."/>
            <person name="Yamane K."/>
            <person name="Yasumoto K."/>
            <person name="Yata K."/>
            <person name="Yoshida K."/>
            <person name="Yoshikawa H.-F."/>
            <person name="Zumstein E."/>
            <person name="Yoshikawa H."/>
            <person name="Danchin A."/>
        </authorList>
    </citation>
    <scope>NUCLEOTIDE SEQUENCE [LARGE SCALE GENOMIC DNA]</scope>
    <source>
        <strain>168</strain>
    </source>
</reference>
<sequence length="293" mass="33175">MELKQLITFITAAEHVNFTLTAKMLNYAQSSVTSQIKSLEEEIGTPLFERLGKRLILTEAGKTFKSYAQKIIALTEEAKMATNQVRETTGTLKIGATESQCTYRLPPIIKEFKQAFPQVKLIFKPYISNEQAKEQLLQGQLDITFILDVNRMEDALHVESLIQDEIKMVAANDHPFPADLPVTLKDLQNETLLLTEDGCSYRTLFENNLHDSGIYPNKLEFVSIEAIKQCVMAGLGIGILPEMTVKDDIAAGRMKELNWQSDCPVFTQLAWHKDKWMSAPLKAFIDLTRKTFK</sequence>
<comment type="subcellular location">
    <subcellularLocation>
        <location evidence="2">Cytoplasm</location>
    </subcellularLocation>
</comment>
<comment type="similarity">
    <text evidence="2">Belongs to the LysR transcriptional regulatory family.</text>
</comment>
<proteinExistence type="inferred from homology"/>
<keyword id="KW-0963">Cytoplasm</keyword>
<keyword id="KW-0238">DNA-binding</keyword>
<keyword id="KW-1185">Reference proteome</keyword>
<keyword id="KW-0804">Transcription</keyword>
<keyword id="KW-0805">Transcription regulation</keyword>